<evidence type="ECO:0000250" key="1">
    <source>
        <dbReference type="UniProtKB" id="P32839"/>
    </source>
</evidence>
<evidence type="ECO:0000250" key="2">
    <source>
        <dbReference type="UniProtKB" id="Q9CZP5"/>
    </source>
</evidence>
<evidence type="ECO:0000255" key="3"/>
<evidence type="ECO:0000305" key="4"/>
<accession>Q7ZV60</accession>
<reference key="1">
    <citation type="journal article" date="2004" name="Proc. Natl. Acad. Sci. U.S.A.">
        <title>Hematopoietic gene expression profile in zebrafish kidney marrow.</title>
        <authorList>
            <person name="Song H.-D."/>
            <person name="Sun X.-J."/>
            <person name="Deng M."/>
            <person name="Zhang G.-W."/>
            <person name="Zhou Y."/>
            <person name="Wu X.-Y."/>
            <person name="Sheng Y."/>
            <person name="Chen Y."/>
            <person name="Ruan Z."/>
            <person name="Jiang C.-L."/>
            <person name="Fan H.-Y."/>
            <person name="Zon L.I."/>
            <person name="Kanki J.P."/>
            <person name="Liu T.X."/>
            <person name="Look A.T."/>
            <person name="Chen Z."/>
        </authorList>
    </citation>
    <scope>NUCLEOTIDE SEQUENCE [LARGE SCALE MRNA]</scope>
    <source>
        <tissue>Kidney marrow</tissue>
    </source>
</reference>
<reference key="2">
    <citation type="submission" date="2003-01" db="EMBL/GenBank/DDBJ databases">
        <authorList>
            <consortium name="NIH - Zebrafish Gene Collection (ZGC) project"/>
        </authorList>
    </citation>
    <scope>NUCLEOTIDE SEQUENCE [LARGE SCALE MRNA]</scope>
    <source>
        <strain>AB</strain>
    </source>
</reference>
<proteinExistence type="evidence at transcript level"/>
<organism>
    <name type="scientific">Danio rerio</name>
    <name type="common">Zebrafish</name>
    <name type="synonym">Brachydanio rerio</name>
    <dbReference type="NCBI Taxonomy" id="7955"/>
    <lineage>
        <taxon>Eukaryota</taxon>
        <taxon>Metazoa</taxon>
        <taxon>Chordata</taxon>
        <taxon>Craniata</taxon>
        <taxon>Vertebrata</taxon>
        <taxon>Euteleostomi</taxon>
        <taxon>Actinopterygii</taxon>
        <taxon>Neopterygii</taxon>
        <taxon>Teleostei</taxon>
        <taxon>Ostariophysi</taxon>
        <taxon>Cypriniformes</taxon>
        <taxon>Danionidae</taxon>
        <taxon>Danioninae</taxon>
        <taxon>Danio</taxon>
    </lineage>
</organism>
<gene>
    <name type="primary">bcs1l</name>
    <name type="ORF">zgc:56205</name>
</gene>
<feature type="chain" id="PRO_0000084774" description="Mitochondrial chaperone BCS1">
    <location>
        <begin position="1"/>
        <end position="420"/>
    </location>
</feature>
<feature type="topological domain" description="Mitochondrial intermembrane" evidence="3">
    <location>
        <begin position="1"/>
        <end position="15"/>
    </location>
</feature>
<feature type="transmembrane region" description="Helical" evidence="3">
    <location>
        <begin position="16"/>
        <end position="32"/>
    </location>
</feature>
<feature type="topological domain" description="Mitochondrial matrix" evidence="3">
    <location>
        <begin position="33"/>
        <end position="420"/>
    </location>
</feature>
<feature type="binding site" evidence="3">
    <location>
        <begin position="230"/>
        <end position="237"/>
    </location>
    <ligand>
        <name>ATP</name>
        <dbReference type="ChEBI" id="CHEBI:30616"/>
    </ligand>
</feature>
<feature type="sequence conflict" description="In Ref. 2; AAH45990." evidence="4" ref="2">
    <original>M</original>
    <variation>T</variation>
    <location>
        <position position="84"/>
    </location>
</feature>
<feature type="sequence conflict" description="In Ref. 2; AAH45990." evidence="4" ref="2">
    <original>I</original>
    <variation>V</variation>
    <location>
        <position position="150"/>
    </location>
</feature>
<protein>
    <recommendedName>
        <fullName>Mitochondrial chaperone BCS1</fullName>
        <ecNumber evidence="1">3.6.1.-</ecNumber>
    </recommendedName>
    <alternativeName>
        <fullName>BCS1-like protein</fullName>
    </alternativeName>
</protein>
<sequence>MTLSDFIGALKDNPYFGAGFGLVGVGTALAVARKGAQVGMIFFRRHYMITLEVPSKDKSYHWLLSWITKHAKHTQHLSVETSYMQHESGKVHTQFDFHPSPGNHIIWYGRKWIRVERVREKQMMDLHTGTPWESVTFTALGRDRQTFFNILQEARELALKQEEGRTVMYTAMGAEWRPFGFPRRRRPLSSVVLESGVAERIVDDVKEFIGNPKWYTDRGIPYRRGYLLYGPPGCGKSSFITALAGELGYSICLMSLSDRSLSDDRLNHLLSVAPQQSIILLEDVDAAFVSRELLPTENPLAYQGMGRLTFSGLLNALDGVASSEARIVFMTTNFIERLDPALVRPGRVDLKQYVGHCSHWQLTQMFRRFYPQESAAEADHFSEQALAAHTDLSAAQVQGHFMLYKTDPAGAIKNIAEIKD</sequence>
<dbReference type="EC" id="3.6.1.-" evidence="1"/>
<dbReference type="EMBL" id="AY394959">
    <property type="protein sequence ID" value="AAQ94586.1"/>
    <property type="molecule type" value="mRNA"/>
</dbReference>
<dbReference type="EMBL" id="BC045990">
    <property type="protein sequence ID" value="AAH45990.1"/>
    <property type="molecule type" value="mRNA"/>
</dbReference>
<dbReference type="RefSeq" id="NP_957476.2">
    <property type="nucleotide sequence ID" value="NM_201182.2"/>
</dbReference>
<dbReference type="SMR" id="Q7ZV60"/>
<dbReference type="FunCoup" id="Q7ZV60">
    <property type="interactions" value="902"/>
</dbReference>
<dbReference type="STRING" id="7955.ENSDARP00000015141"/>
<dbReference type="PaxDb" id="7955-ENSDARP00000015141"/>
<dbReference type="Ensembl" id="ENSDART00000022246">
    <property type="protein sequence ID" value="ENSDARP00000015141"/>
    <property type="gene ID" value="ENSDARG00000012295"/>
</dbReference>
<dbReference type="GeneID" id="394157"/>
<dbReference type="KEGG" id="dre:394157"/>
<dbReference type="AGR" id="ZFIN:ZDB-GENE-040426-938"/>
<dbReference type="CTD" id="617"/>
<dbReference type="ZFIN" id="ZDB-GENE-040426-938">
    <property type="gene designation" value="bcs1l"/>
</dbReference>
<dbReference type="eggNOG" id="KOG0743">
    <property type="taxonomic scope" value="Eukaryota"/>
</dbReference>
<dbReference type="HOGENOM" id="CLU_010189_6_2_1"/>
<dbReference type="InParanoid" id="Q7ZV60"/>
<dbReference type="OMA" id="WMTLYQR"/>
<dbReference type="OrthoDB" id="10251412at2759"/>
<dbReference type="PhylomeDB" id="Q7ZV60"/>
<dbReference type="TreeFam" id="TF315009"/>
<dbReference type="PRO" id="PR:Q7ZV60"/>
<dbReference type="Proteomes" id="UP000000437">
    <property type="component" value="Chromosome 9"/>
</dbReference>
<dbReference type="Bgee" id="ENSDARG00000012295">
    <property type="expression patterns" value="Expressed in granulocyte and 26 other cell types or tissues"/>
</dbReference>
<dbReference type="ExpressionAtlas" id="Q7ZV60">
    <property type="expression patterns" value="baseline and differential"/>
</dbReference>
<dbReference type="GO" id="GO:0005743">
    <property type="term" value="C:mitochondrial inner membrane"/>
    <property type="evidence" value="ECO:0000318"/>
    <property type="project" value="GO_Central"/>
</dbReference>
<dbReference type="GO" id="GO:0005524">
    <property type="term" value="F:ATP binding"/>
    <property type="evidence" value="ECO:0007669"/>
    <property type="project" value="UniProtKB-KW"/>
</dbReference>
<dbReference type="GO" id="GO:0016887">
    <property type="term" value="F:ATP hydrolysis activity"/>
    <property type="evidence" value="ECO:0007669"/>
    <property type="project" value="InterPro"/>
</dbReference>
<dbReference type="GO" id="GO:0009653">
    <property type="term" value="P:anatomical structure morphogenesis"/>
    <property type="evidence" value="ECO:0007669"/>
    <property type="project" value="UniProtKB-ARBA"/>
</dbReference>
<dbReference type="GO" id="GO:0034551">
    <property type="term" value="P:mitochondrial respiratory chain complex III assembly"/>
    <property type="evidence" value="ECO:0000318"/>
    <property type="project" value="GO_Central"/>
</dbReference>
<dbReference type="GO" id="GO:0032979">
    <property type="term" value="P:protein insertion into mitochondrial inner membrane from matrix"/>
    <property type="evidence" value="ECO:0000318"/>
    <property type="project" value="GO_Central"/>
</dbReference>
<dbReference type="CDD" id="cd19510">
    <property type="entry name" value="RecA-like_BCS1"/>
    <property type="match status" value="1"/>
</dbReference>
<dbReference type="FunFam" id="3.40.50.300:FF:000768">
    <property type="entry name" value="Probable mitochondrial chaperone bcs1"/>
    <property type="match status" value="1"/>
</dbReference>
<dbReference type="Gene3D" id="3.40.50.300">
    <property type="entry name" value="P-loop containing nucleotide triphosphate hydrolases"/>
    <property type="match status" value="1"/>
</dbReference>
<dbReference type="InterPro" id="IPR003593">
    <property type="entry name" value="AAA+_ATPase"/>
</dbReference>
<dbReference type="InterPro" id="IPR003959">
    <property type="entry name" value="ATPase_AAA_core"/>
</dbReference>
<dbReference type="InterPro" id="IPR003960">
    <property type="entry name" value="ATPase_AAA_CS"/>
</dbReference>
<dbReference type="InterPro" id="IPR014851">
    <property type="entry name" value="BCS1_N"/>
</dbReference>
<dbReference type="InterPro" id="IPR050747">
    <property type="entry name" value="Mitochondrial_chaperone_BCS1"/>
</dbReference>
<dbReference type="InterPro" id="IPR027417">
    <property type="entry name" value="P-loop_NTPase"/>
</dbReference>
<dbReference type="PANTHER" id="PTHR23070">
    <property type="entry name" value="BCS1 AAA-TYPE ATPASE"/>
    <property type="match status" value="1"/>
</dbReference>
<dbReference type="Pfam" id="PF00004">
    <property type="entry name" value="AAA"/>
    <property type="match status" value="1"/>
</dbReference>
<dbReference type="Pfam" id="PF25426">
    <property type="entry name" value="AAA_lid_BCS1"/>
    <property type="match status" value="1"/>
</dbReference>
<dbReference type="Pfam" id="PF08740">
    <property type="entry name" value="BCS1_N"/>
    <property type="match status" value="1"/>
</dbReference>
<dbReference type="SMART" id="SM00382">
    <property type="entry name" value="AAA"/>
    <property type="match status" value="1"/>
</dbReference>
<dbReference type="SMART" id="SM01024">
    <property type="entry name" value="BCS1_N"/>
    <property type="match status" value="1"/>
</dbReference>
<dbReference type="SUPFAM" id="SSF52540">
    <property type="entry name" value="P-loop containing nucleoside triphosphate hydrolases"/>
    <property type="match status" value="1"/>
</dbReference>
<dbReference type="PROSITE" id="PS00674">
    <property type="entry name" value="AAA"/>
    <property type="match status" value="1"/>
</dbReference>
<comment type="function">
    <text evidence="2">Chaperone necessary for the incorporation of Rieske iron-sulfur protein uqcrfs1 into the mitochondrial respiratory chain complex III.</text>
</comment>
<comment type="catalytic activity">
    <reaction evidence="1">
        <text>ATP + H2O = ADP + phosphate + H(+)</text>
        <dbReference type="Rhea" id="RHEA:13065"/>
        <dbReference type="ChEBI" id="CHEBI:15377"/>
        <dbReference type="ChEBI" id="CHEBI:15378"/>
        <dbReference type="ChEBI" id="CHEBI:30616"/>
        <dbReference type="ChEBI" id="CHEBI:43474"/>
        <dbReference type="ChEBI" id="CHEBI:456216"/>
    </reaction>
    <physiologicalReaction direction="left-to-right" evidence="1">
        <dbReference type="Rhea" id="RHEA:13066"/>
    </physiologicalReaction>
</comment>
<comment type="subcellular location">
    <subcellularLocation>
        <location evidence="2">Mitochondrion inner membrane</location>
        <topology evidence="3">Single-pass membrane protein</topology>
    </subcellularLocation>
</comment>
<comment type="similarity">
    <text evidence="4">Belongs to the AAA ATPase family. BCS1 subfamily.</text>
</comment>
<keyword id="KW-0067">ATP-binding</keyword>
<keyword id="KW-0143">Chaperone</keyword>
<keyword id="KW-0378">Hydrolase</keyword>
<keyword id="KW-0472">Membrane</keyword>
<keyword id="KW-0496">Mitochondrion</keyword>
<keyword id="KW-0999">Mitochondrion inner membrane</keyword>
<keyword id="KW-0547">Nucleotide-binding</keyword>
<keyword id="KW-1185">Reference proteome</keyword>
<keyword id="KW-0812">Transmembrane</keyword>
<keyword id="KW-1133">Transmembrane helix</keyword>
<name>BCS1_DANRE</name>